<gene>
    <name evidence="1" type="primary">rplC</name>
    <name type="ordered locus">Francci3_0582</name>
</gene>
<name>RL3_FRACC</name>
<proteinExistence type="inferred from homology"/>
<keyword id="KW-1185">Reference proteome</keyword>
<keyword id="KW-0687">Ribonucleoprotein</keyword>
<keyword id="KW-0689">Ribosomal protein</keyword>
<keyword id="KW-0694">RNA-binding</keyword>
<keyword id="KW-0699">rRNA-binding</keyword>
<protein>
    <recommendedName>
        <fullName evidence="1">Large ribosomal subunit protein uL3</fullName>
    </recommendedName>
    <alternativeName>
        <fullName evidence="2">50S ribosomal protein L3</fullName>
    </alternativeName>
</protein>
<sequence>MLIRNYRGLLGTKLGMTQVWDANNRVVPVTVIKAGPNVVTQVKTPDSDGYSAVQLGYGEVDPRKINKPARGHFATSGVTPRRHLVELRTADAGNYRPGQELTGEVFSAGTVVDVTGTSKGKGFAGVMKRHGFKGLGAGHGVERKHRSPGSVGGCATPGRVFKGLRMAGRMGHVRTTTSGLTIHAVDTERGYLLVRGAVPGPDGGLVLVRSAAKRPAPEAIAPAAELAGTGEEVSA</sequence>
<feature type="chain" id="PRO_0000241347" description="Large ribosomal subunit protein uL3">
    <location>
        <begin position="1"/>
        <end position="235"/>
    </location>
</feature>
<evidence type="ECO:0000255" key="1">
    <source>
        <dbReference type="HAMAP-Rule" id="MF_01325"/>
    </source>
</evidence>
<evidence type="ECO:0000305" key="2"/>
<accession>Q2JFH6</accession>
<reference key="1">
    <citation type="journal article" date="2007" name="Genome Res.">
        <title>Genome characteristics of facultatively symbiotic Frankia sp. strains reflect host range and host plant biogeography.</title>
        <authorList>
            <person name="Normand P."/>
            <person name="Lapierre P."/>
            <person name="Tisa L.S."/>
            <person name="Gogarten J.P."/>
            <person name="Alloisio N."/>
            <person name="Bagnarol E."/>
            <person name="Bassi C.A."/>
            <person name="Berry A.M."/>
            <person name="Bickhart D.M."/>
            <person name="Choisne N."/>
            <person name="Couloux A."/>
            <person name="Cournoyer B."/>
            <person name="Cruveiller S."/>
            <person name="Daubin V."/>
            <person name="Demange N."/>
            <person name="Francino M.P."/>
            <person name="Goltsman E."/>
            <person name="Huang Y."/>
            <person name="Kopp O.R."/>
            <person name="Labarre L."/>
            <person name="Lapidus A."/>
            <person name="Lavire C."/>
            <person name="Marechal J."/>
            <person name="Martinez M."/>
            <person name="Mastronunzio J.E."/>
            <person name="Mullin B.C."/>
            <person name="Niemann J."/>
            <person name="Pujic P."/>
            <person name="Rawnsley T."/>
            <person name="Rouy Z."/>
            <person name="Schenowitz C."/>
            <person name="Sellstedt A."/>
            <person name="Tavares F."/>
            <person name="Tomkins J.P."/>
            <person name="Vallenet D."/>
            <person name="Valverde C."/>
            <person name="Wall L.G."/>
            <person name="Wang Y."/>
            <person name="Medigue C."/>
            <person name="Benson D.R."/>
        </authorList>
    </citation>
    <scope>NUCLEOTIDE SEQUENCE [LARGE SCALE GENOMIC DNA]</scope>
    <source>
        <strain>DSM 45818 / CECT 9043 / HFP020203 / CcI3</strain>
    </source>
</reference>
<organism>
    <name type="scientific">Frankia casuarinae (strain DSM 45818 / CECT 9043 / HFP020203 / CcI3)</name>
    <dbReference type="NCBI Taxonomy" id="106370"/>
    <lineage>
        <taxon>Bacteria</taxon>
        <taxon>Bacillati</taxon>
        <taxon>Actinomycetota</taxon>
        <taxon>Actinomycetes</taxon>
        <taxon>Frankiales</taxon>
        <taxon>Frankiaceae</taxon>
        <taxon>Frankia</taxon>
    </lineage>
</organism>
<dbReference type="EMBL" id="CP000249">
    <property type="protein sequence ID" value="ABD09966.1"/>
    <property type="molecule type" value="Genomic_DNA"/>
</dbReference>
<dbReference type="RefSeq" id="WP_011435039.1">
    <property type="nucleotide sequence ID" value="NZ_JENI01000032.1"/>
</dbReference>
<dbReference type="SMR" id="Q2JFH6"/>
<dbReference type="STRING" id="106370.Francci3_0582"/>
<dbReference type="KEGG" id="fra:Francci3_0582"/>
<dbReference type="eggNOG" id="COG0087">
    <property type="taxonomic scope" value="Bacteria"/>
</dbReference>
<dbReference type="HOGENOM" id="CLU_044142_4_1_11"/>
<dbReference type="OrthoDB" id="9806135at2"/>
<dbReference type="PhylomeDB" id="Q2JFH6"/>
<dbReference type="Proteomes" id="UP000001937">
    <property type="component" value="Chromosome"/>
</dbReference>
<dbReference type="GO" id="GO:0022625">
    <property type="term" value="C:cytosolic large ribosomal subunit"/>
    <property type="evidence" value="ECO:0007669"/>
    <property type="project" value="TreeGrafter"/>
</dbReference>
<dbReference type="GO" id="GO:0019843">
    <property type="term" value="F:rRNA binding"/>
    <property type="evidence" value="ECO:0007669"/>
    <property type="project" value="UniProtKB-UniRule"/>
</dbReference>
<dbReference type="GO" id="GO:0003735">
    <property type="term" value="F:structural constituent of ribosome"/>
    <property type="evidence" value="ECO:0007669"/>
    <property type="project" value="InterPro"/>
</dbReference>
<dbReference type="GO" id="GO:0006412">
    <property type="term" value="P:translation"/>
    <property type="evidence" value="ECO:0007669"/>
    <property type="project" value="UniProtKB-UniRule"/>
</dbReference>
<dbReference type="FunFam" id="2.40.30.10:FF:000004">
    <property type="entry name" value="50S ribosomal protein L3"/>
    <property type="match status" value="1"/>
</dbReference>
<dbReference type="FunFam" id="3.30.160.810:FF:000001">
    <property type="entry name" value="50S ribosomal protein L3"/>
    <property type="match status" value="1"/>
</dbReference>
<dbReference type="Gene3D" id="3.30.160.810">
    <property type="match status" value="1"/>
</dbReference>
<dbReference type="Gene3D" id="2.40.30.10">
    <property type="entry name" value="Translation factors"/>
    <property type="match status" value="1"/>
</dbReference>
<dbReference type="HAMAP" id="MF_01325_B">
    <property type="entry name" value="Ribosomal_uL3_B"/>
    <property type="match status" value="1"/>
</dbReference>
<dbReference type="InterPro" id="IPR000597">
    <property type="entry name" value="Ribosomal_uL3"/>
</dbReference>
<dbReference type="InterPro" id="IPR019927">
    <property type="entry name" value="Ribosomal_uL3_bac/org-type"/>
</dbReference>
<dbReference type="InterPro" id="IPR019926">
    <property type="entry name" value="Ribosomal_uL3_CS"/>
</dbReference>
<dbReference type="InterPro" id="IPR009000">
    <property type="entry name" value="Transl_B-barrel_sf"/>
</dbReference>
<dbReference type="NCBIfam" id="TIGR03625">
    <property type="entry name" value="L3_bact"/>
    <property type="match status" value="1"/>
</dbReference>
<dbReference type="PANTHER" id="PTHR11229">
    <property type="entry name" value="50S RIBOSOMAL PROTEIN L3"/>
    <property type="match status" value="1"/>
</dbReference>
<dbReference type="PANTHER" id="PTHR11229:SF16">
    <property type="entry name" value="LARGE RIBOSOMAL SUBUNIT PROTEIN UL3C"/>
    <property type="match status" value="1"/>
</dbReference>
<dbReference type="Pfam" id="PF00297">
    <property type="entry name" value="Ribosomal_L3"/>
    <property type="match status" value="1"/>
</dbReference>
<dbReference type="SUPFAM" id="SSF50447">
    <property type="entry name" value="Translation proteins"/>
    <property type="match status" value="1"/>
</dbReference>
<dbReference type="PROSITE" id="PS00474">
    <property type="entry name" value="RIBOSOMAL_L3"/>
    <property type="match status" value="1"/>
</dbReference>
<comment type="function">
    <text evidence="1">One of the primary rRNA binding proteins, it binds directly near the 3'-end of the 23S rRNA, where it nucleates assembly of the 50S subunit.</text>
</comment>
<comment type="subunit">
    <text evidence="1">Part of the 50S ribosomal subunit. Forms a cluster with proteins L14 and L19.</text>
</comment>
<comment type="similarity">
    <text evidence="1">Belongs to the universal ribosomal protein uL3 family.</text>
</comment>